<evidence type="ECO:0000250" key="1">
    <source>
        <dbReference type="UniProtKB" id="P56399"/>
    </source>
</evidence>
<evidence type="ECO:0000255" key="2">
    <source>
        <dbReference type="PROSITE-ProRule" id="PRU00212"/>
    </source>
</evidence>
<evidence type="ECO:0000255" key="3">
    <source>
        <dbReference type="PROSITE-ProRule" id="PRU00502"/>
    </source>
</evidence>
<evidence type="ECO:0000255" key="4">
    <source>
        <dbReference type="PROSITE-ProRule" id="PRU10092"/>
    </source>
</evidence>
<evidence type="ECO:0000255" key="5">
    <source>
        <dbReference type="PROSITE-ProRule" id="PRU10093"/>
    </source>
</evidence>
<evidence type="ECO:0000256" key="6">
    <source>
        <dbReference type="SAM" id="MobiDB-lite"/>
    </source>
</evidence>
<evidence type="ECO:0000269" key="7">
    <source>
    </source>
</evidence>
<evidence type="ECO:0000269" key="8">
    <source>
    </source>
</evidence>
<evidence type="ECO:0000269" key="9">
    <source>
    </source>
</evidence>
<evidence type="ECO:0000269" key="10">
    <source>
    </source>
</evidence>
<evidence type="ECO:0000269" key="11">
    <source>
    </source>
</evidence>
<evidence type="ECO:0000269" key="12">
    <source>
    </source>
</evidence>
<evidence type="ECO:0000269" key="13">
    <source>
    </source>
</evidence>
<evidence type="ECO:0000269" key="14">
    <source>
    </source>
</evidence>
<evidence type="ECO:0000269" key="15">
    <source>
    </source>
</evidence>
<evidence type="ECO:0000269" key="16">
    <source>
    </source>
</evidence>
<evidence type="ECO:0000269" key="17">
    <source>
    </source>
</evidence>
<evidence type="ECO:0000269" key="18">
    <source>
    </source>
</evidence>
<evidence type="ECO:0000269" key="19">
    <source ref="32"/>
</evidence>
<evidence type="ECO:0000303" key="20">
    <source>
    </source>
</evidence>
<evidence type="ECO:0000305" key="21"/>
<evidence type="ECO:0007744" key="22">
    <source>
    </source>
</evidence>
<evidence type="ECO:0007744" key="23">
    <source>
    </source>
</evidence>
<evidence type="ECO:0007744" key="24">
    <source>
    </source>
</evidence>
<evidence type="ECO:0007744" key="25">
    <source>
    </source>
</evidence>
<evidence type="ECO:0007744" key="26">
    <source>
    </source>
</evidence>
<evidence type="ECO:0007744" key="27">
    <source>
    </source>
</evidence>
<evidence type="ECO:0007744" key="28">
    <source>
    </source>
</evidence>
<evidence type="ECO:0007829" key="29">
    <source>
        <dbReference type="PDB" id="2G45"/>
    </source>
</evidence>
<evidence type="ECO:0007829" key="30">
    <source>
        <dbReference type="PDB" id="3IHP"/>
    </source>
</evidence>
<evidence type="ECO:0007829" key="31">
    <source>
        <dbReference type="PDB" id="7MS7"/>
    </source>
</evidence>
<keyword id="KW-0002">3D-structure</keyword>
<keyword id="KW-0007">Acetylation</keyword>
<keyword id="KW-0025">Alternative splicing</keyword>
<keyword id="KW-0963">Cytoplasm</keyword>
<keyword id="KW-0903">Direct protein sequencing</keyword>
<keyword id="KW-1015">Disulfide bond</keyword>
<keyword id="KW-0378">Hydrolase</keyword>
<keyword id="KW-1017">Isopeptide bond</keyword>
<keyword id="KW-0479">Metal-binding</keyword>
<keyword id="KW-0539">Nucleus</keyword>
<keyword id="KW-0597">Phosphoprotein</keyword>
<keyword id="KW-0645">Protease</keyword>
<keyword id="KW-1267">Proteomics identification</keyword>
<keyword id="KW-1185">Reference proteome</keyword>
<keyword id="KW-0677">Repeat</keyword>
<keyword id="KW-0788">Thiol protease</keyword>
<keyword id="KW-0832">Ubl conjugation</keyword>
<keyword id="KW-0833">Ubl conjugation pathway</keyword>
<keyword id="KW-0862">Zinc</keyword>
<keyword id="KW-0863">Zinc-finger</keyword>
<reference key="1">
    <citation type="journal article" date="1995" name="FEBS Lett.">
        <title>cDNA cloning of a human 100 kDa de-ubiquitinating enzyme: the 100 kDa human de-ubiquitinase belongs to the ubiquitin C-terminal hydrolase family 2 (UCH2).</title>
        <authorList>
            <person name="Falquet L."/>
            <person name="Paquet N."/>
            <person name="Frutiger S."/>
            <person name="Hughes G.J."/>
            <person name="Hoang-Van K."/>
            <person name="Jaton J.-C."/>
        </authorList>
    </citation>
    <scope>NUCLEOTIDE SEQUENCE [MRNA]</scope>
    <scope>PARTIAL PROTEIN SEQUENCE</scope>
</reference>
<reference key="2">
    <citation type="journal article" date="1996" name="Genome Res.">
        <title>A gene-rich cluster between the CD4 and triosephosphate isomerase genes at human chromosome 12p13.</title>
        <authorList>
            <person name="Ansari-Lari M.A."/>
            <person name="Muzny D.M."/>
            <person name="Lu J."/>
            <person name="Lu F."/>
            <person name="Lilley C.E."/>
            <person name="Spanos S."/>
            <person name="Malley T."/>
            <person name="Gibbs R.A."/>
        </authorList>
    </citation>
    <scope>NUCLEOTIDE SEQUENCE [GENOMIC DNA / MRNA]</scope>
</reference>
<reference key="3">
    <citation type="journal article" date="1997" name="Genome Res.">
        <title>Large-scale sequencing in human chromosome 12p13: experimental and computational gene structure determination.</title>
        <authorList>
            <person name="Ansari-Lari M.A."/>
            <person name="Shen Y."/>
            <person name="Muzny D.M."/>
            <person name="Lee W."/>
            <person name="Gibbs R.A."/>
        </authorList>
    </citation>
    <scope>NUCLEOTIDE SEQUENCE [GENOMIC DNA]</scope>
</reference>
<reference key="4">
    <citation type="submission" date="1995-11" db="EMBL/GenBank/DDBJ databases">
        <authorList>
            <person name="Tashayev V.L."/>
            <person name="O'Connor L.B."/>
            <person name="Larsen C.N."/>
            <person name="Kasperek E."/>
            <person name="Pickart C.M."/>
        </authorList>
    </citation>
    <scope>NUCLEOTIDE SEQUENCE [MRNA]</scope>
</reference>
<reference key="5">
    <citation type="submission" date="2005-09" db="EMBL/GenBank/DDBJ databases">
        <authorList>
            <person name="Mural R.J."/>
            <person name="Istrail S."/>
            <person name="Sutton G.G."/>
            <person name="Florea L."/>
            <person name="Halpern A.L."/>
            <person name="Mobarry C.M."/>
            <person name="Lippert R."/>
            <person name="Walenz B."/>
            <person name="Shatkay H."/>
            <person name="Dew I."/>
            <person name="Miller J.R."/>
            <person name="Flanigan M.J."/>
            <person name="Edwards N.J."/>
            <person name="Bolanos R."/>
            <person name="Fasulo D."/>
            <person name="Halldorsson B.V."/>
            <person name="Hannenhalli S."/>
            <person name="Turner R."/>
            <person name="Yooseph S."/>
            <person name="Lu F."/>
            <person name="Nusskern D.R."/>
            <person name="Shue B.C."/>
            <person name="Zheng X.H."/>
            <person name="Zhong F."/>
            <person name="Delcher A.L."/>
            <person name="Huson D.H."/>
            <person name="Kravitz S.A."/>
            <person name="Mouchard L."/>
            <person name="Reinert K."/>
            <person name="Remington K.A."/>
            <person name="Clark A.G."/>
            <person name="Waterman M.S."/>
            <person name="Eichler E.E."/>
            <person name="Adams M.D."/>
            <person name="Hunkapiller M.W."/>
            <person name="Myers E.W."/>
            <person name="Venter J.C."/>
        </authorList>
    </citation>
    <scope>NUCLEOTIDE SEQUENCE [LARGE SCALE GENOMIC DNA]</scope>
</reference>
<reference key="6">
    <citation type="journal article" date="2004" name="Genome Res.">
        <title>The status, quality, and expansion of the NIH full-length cDNA project: the Mammalian Gene Collection (MGC).</title>
        <authorList>
            <consortium name="The MGC Project Team"/>
        </authorList>
    </citation>
    <scope>NUCLEOTIDE SEQUENCE [LARGE SCALE MRNA] (ISOFORMS LONG AND SHORT)</scope>
    <source>
        <tissue>Kidney</tissue>
        <tissue>Lung</tissue>
    </source>
</reference>
<reference key="7">
    <citation type="journal article" date="1995" name="FEBS Lett.">
        <title>A human de-ubiquitinating enzyme with both isopeptidase and peptidase activities in vitro.</title>
        <authorList>
            <person name="Falquet L."/>
            <person name="Paquet N."/>
            <person name="Frutiger S."/>
            <person name="Hughes G.J."/>
            <person name="Hoang-Van K."/>
            <person name="Jaton J.-C."/>
        </authorList>
    </citation>
    <scope>CHARACTERIZATION</scope>
</reference>
<reference key="8">
    <citation type="journal article" date="2006" name="Nat. Biotechnol.">
        <title>A probability-based approach for high-throughput protein phosphorylation analysis and site localization.</title>
        <authorList>
            <person name="Beausoleil S.A."/>
            <person name="Villen J."/>
            <person name="Gerber S.A."/>
            <person name="Rush J."/>
            <person name="Gygi S.P."/>
        </authorList>
    </citation>
    <scope>IDENTIFICATION BY MASS SPECTROMETRY [LARGE SCALE ANALYSIS]</scope>
    <source>
        <tissue>Cervix carcinoma</tissue>
    </source>
</reference>
<reference key="9">
    <citation type="journal article" date="2008" name="J. Biol. Chem.">
        <title>Recognition of polyubiquitin isoforms by the multiple ubiquitin binding modules of isopeptidase T.</title>
        <authorList>
            <person name="Reyes-Turcu F.E."/>
            <person name="Shanks J.R."/>
            <person name="Komander D."/>
            <person name="Wilkinson K.D."/>
        </authorList>
    </citation>
    <scope>MUTAGENESIS OF ARG-221; CYS-335; ASP-435; MET-666 AND MET-734</scope>
    <scope>POLYUBIQUITIN BINDING</scope>
</reference>
<reference key="10">
    <citation type="journal article" date="2008" name="Proc. Natl. Acad. Sci. U.S.A.">
        <title>A quantitative atlas of mitotic phosphorylation.</title>
        <authorList>
            <person name="Dephoure N."/>
            <person name="Zhou C."/>
            <person name="Villen J."/>
            <person name="Beausoleil S.A."/>
            <person name="Bakalarski C.E."/>
            <person name="Elledge S.J."/>
            <person name="Gygi S.P."/>
        </authorList>
    </citation>
    <scope>IDENTIFICATION BY MASS SPECTROMETRY [LARGE SCALE ANALYSIS]</scope>
    <source>
        <tissue>Cervix carcinoma</tissue>
    </source>
</reference>
<reference key="11">
    <citation type="journal article" date="2009" name="Anal. Chem.">
        <title>Lys-N and trypsin cover complementary parts of the phosphoproteome in a refined SCX-based approach.</title>
        <authorList>
            <person name="Gauci S."/>
            <person name="Helbig A.O."/>
            <person name="Slijper M."/>
            <person name="Krijgsveld J."/>
            <person name="Heck A.J."/>
            <person name="Mohammed S."/>
        </authorList>
    </citation>
    <scope>ACETYLATION [LARGE SCALE ANALYSIS] AT ALA-2</scope>
    <scope>CLEAVAGE OF INITIATOR METHIONINE [LARGE SCALE ANALYSIS]</scope>
    <scope>IDENTIFICATION BY MASS SPECTROMETRY [LARGE SCALE ANALYSIS]</scope>
</reference>
<reference key="12">
    <citation type="journal article" date="2009" name="J. Biol. Chem.">
        <title>Suppression of the deubiquitinating enzyme USP5 causes the accumulation of unanchored polyubiquitin and the activation of p53.</title>
        <authorList>
            <person name="Dayal S."/>
            <person name="Sparks A."/>
            <person name="Jacob J."/>
            <person name="Allende-Vega N."/>
            <person name="Lane D.P."/>
            <person name="Saville M.K."/>
        </authorList>
    </citation>
    <scope>FUNCTION</scope>
</reference>
<reference key="13">
    <citation type="journal article" date="2009" name="Sci. Signal.">
        <title>Quantitative phosphoproteomic analysis of T cell receptor signaling reveals system-wide modulation of protein-protein interactions.</title>
        <authorList>
            <person name="Mayya V."/>
            <person name="Lundgren D.H."/>
            <person name="Hwang S.-I."/>
            <person name="Rezaul K."/>
            <person name="Wu L."/>
            <person name="Eng J.K."/>
            <person name="Rodionov V."/>
            <person name="Han D.K."/>
        </authorList>
    </citation>
    <scope>PHOSPHORYLATION [LARGE SCALE ANALYSIS] AT SER-783</scope>
    <scope>IDENTIFICATION BY MASS SPECTROMETRY [LARGE SCALE ANALYSIS]</scope>
    <source>
        <tissue>Leukemic T-cell</tissue>
    </source>
</reference>
<reference key="14">
    <citation type="journal article" date="2010" name="Sci. Signal.">
        <title>Quantitative phosphoproteomics reveals widespread full phosphorylation site occupancy during mitosis.</title>
        <authorList>
            <person name="Olsen J.V."/>
            <person name="Vermeulen M."/>
            <person name="Santamaria A."/>
            <person name="Kumar C."/>
            <person name="Miller M.L."/>
            <person name="Jensen L.J."/>
            <person name="Gnad F."/>
            <person name="Cox J."/>
            <person name="Jensen T.S."/>
            <person name="Nigg E.A."/>
            <person name="Brunak S."/>
            <person name="Mann M."/>
        </authorList>
    </citation>
    <scope>PHOSPHORYLATION [LARGE SCALE ANALYSIS] AT SER-783</scope>
    <scope>IDENTIFICATION BY MASS SPECTROMETRY [LARGE SCALE ANALYSIS]</scope>
    <source>
        <tissue>Cervix carcinoma</tissue>
    </source>
</reference>
<reference key="15">
    <citation type="journal article" date="2011" name="BMC Syst. Biol.">
        <title>Initial characterization of the human central proteome.</title>
        <authorList>
            <person name="Burkard T.R."/>
            <person name="Planyavsky M."/>
            <person name="Kaupe I."/>
            <person name="Breitwieser F.P."/>
            <person name="Buerckstuemmer T."/>
            <person name="Bennett K.L."/>
            <person name="Superti-Furga G."/>
            <person name="Colinge J."/>
        </authorList>
    </citation>
    <scope>IDENTIFICATION BY MASS SPECTROMETRY [LARGE SCALE ANALYSIS]</scope>
</reference>
<reference key="16">
    <citation type="journal article" date="2011" name="PLoS ONE">
        <title>Domain analysis reveals that a deubiquitinating enzyme USP13 performs non-activating catalysis for Lys63-linked polyubiquitin.</title>
        <authorList>
            <person name="Zhang Y.H."/>
            <person name="Zhou C.J."/>
            <person name="Zhou Z.R."/>
            <person name="Song A.X."/>
            <person name="Hu H.Y."/>
        </authorList>
    </citation>
    <scope>MUTAGENESIS OF 221-ARG--TYR-223 AND TYR-261</scope>
</reference>
<reference key="17">
    <citation type="journal article" date="2012" name="Mol. Cell. Proteomics">
        <title>Comparative large-scale characterisation of plant vs. mammal proteins reveals similar and idiosyncratic N-alpha acetylation features.</title>
        <authorList>
            <person name="Bienvenut W.V."/>
            <person name="Sumpton D."/>
            <person name="Martinez A."/>
            <person name="Lilla S."/>
            <person name="Espagne C."/>
            <person name="Meinnel T."/>
            <person name="Giglione C."/>
        </authorList>
    </citation>
    <scope>ACETYLATION [LARGE SCALE ANALYSIS] AT ALA-2</scope>
    <scope>CLEAVAGE OF INITIATOR METHIONINE [LARGE SCALE ANALYSIS]</scope>
    <scope>IDENTIFICATION BY MASS SPECTROMETRY [LARGE SCALE ANALYSIS]</scope>
</reference>
<reference key="18">
    <citation type="journal article" date="2012" name="Proc. Natl. Acad. Sci. U.S.A.">
        <title>N-terminal acetylome analyses and functional insights of the N-terminal acetyltransferase NatB.</title>
        <authorList>
            <person name="Van Damme P."/>
            <person name="Lasa M."/>
            <person name="Polevoda B."/>
            <person name="Gazquez C."/>
            <person name="Elosegui-Artola A."/>
            <person name="Kim D.S."/>
            <person name="De Juan-Pardo E."/>
            <person name="Demeyer K."/>
            <person name="Hole K."/>
            <person name="Larrea E."/>
            <person name="Timmerman E."/>
            <person name="Prieto J."/>
            <person name="Arnesen T."/>
            <person name="Sherman F."/>
            <person name="Gevaert K."/>
            <person name="Aldabe R."/>
        </authorList>
    </citation>
    <scope>ACETYLATION [LARGE SCALE ANALYSIS] AT ALA-2</scope>
    <scope>CLEAVAGE OF INITIATOR METHIONINE [LARGE SCALE ANALYSIS]</scope>
    <scope>IDENTIFICATION BY MASS SPECTROMETRY [LARGE SCALE ANALYSIS]</scope>
</reference>
<reference key="19">
    <citation type="journal article" date="2013" name="J. Proteome Res.">
        <title>Toward a comprehensive characterization of a human cancer cell phosphoproteome.</title>
        <authorList>
            <person name="Zhou H."/>
            <person name="Di Palma S."/>
            <person name="Preisinger C."/>
            <person name="Peng M."/>
            <person name="Polat A.N."/>
            <person name="Heck A.J."/>
            <person name="Mohammed S."/>
        </authorList>
    </citation>
    <scope>PHOSPHORYLATION [LARGE SCALE ANALYSIS] AT THR-292; SER-779; SER-783 AND SER-785</scope>
    <scope>IDENTIFICATION BY MASS SPECTROMETRY [LARGE SCALE ANALYSIS]</scope>
    <source>
        <tissue>Cervix carcinoma</tissue>
        <tissue>Erythroleukemia</tissue>
    </source>
</reference>
<reference key="20">
    <citation type="journal article" date="2014" name="J. Proteomics">
        <title>An enzyme assisted RP-RPLC approach for in-depth analysis of human liver phosphoproteome.</title>
        <authorList>
            <person name="Bian Y."/>
            <person name="Song C."/>
            <person name="Cheng K."/>
            <person name="Dong M."/>
            <person name="Wang F."/>
            <person name="Huang J."/>
            <person name="Sun D."/>
            <person name="Wang L."/>
            <person name="Ye M."/>
            <person name="Zou H."/>
        </authorList>
    </citation>
    <scope>PHOSPHORYLATION [LARGE SCALE ANALYSIS] AT SER-156</scope>
    <scope>IDENTIFICATION BY MASS SPECTROMETRY [LARGE SCALE ANALYSIS]</scope>
    <source>
        <tissue>Liver</tissue>
    </source>
</reference>
<reference key="21">
    <citation type="journal article" date="2016" name="EMBO J.">
        <title>Wnt-induced deubiquitination FoxM1 ensures nucleus beta-catenin transactivation.</title>
        <authorList>
            <person name="Chen Y."/>
            <person name="Li Y."/>
            <person name="Xue J."/>
            <person name="Gong A."/>
            <person name="Yu G."/>
            <person name="Zhou A."/>
            <person name="Lin K."/>
            <person name="Zhang S."/>
            <person name="Zhang N."/>
            <person name="Gottardi C.J."/>
            <person name="Huang S."/>
        </authorList>
    </citation>
    <scope>FUNCTION</scope>
</reference>
<reference key="22">
    <citation type="journal article" date="2016" name="Biochem. Biophys. Res. Commun.">
        <title>Smurf1 represses TNF-alpha production through ubiquitination and destabilization of USP5.</title>
        <authorList>
            <person name="Qian G."/>
            <person name="Ren Y."/>
            <person name="Zuo Y."/>
            <person name="Yuan Y."/>
            <person name="Zhao P."/>
            <person name="Wang X."/>
            <person name="Cheng Q."/>
            <person name="Liu J."/>
            <person name="Zhang L."/>
            <person name="Guo T."/>
            <person name="Liu C."/>
            <person name="Zheng H."/>
        </authorList>
    </citation>
    <scope>UBIQUITINATION BY SMURF1</scope>
</reference>
<reference key="23">
    <citation type="journal article" date="2018" name="J. Cell Sci.">
        <title>Deubiquitylases USP5 and USP13 are recruited to and regulate heat-induced stress granules through their deubiquitylating activities.</title>
        <authorList>
            <person name="Xie X."/>
            <person name="Matsumoto S."/>
            <person name="Endo A."/>
            <person name="Fukushima T."/>
            <person name="Kawahara H."/>
            <person name="Saeki Y."/>
            <person name="Komada M."/>
        </authorList>
    </citation>
    <scope>FUNCTION</scope>
    <scope>SUBCELLULAR LOCATION</scope>
    <scope>MUTAGENESIS OF CYS-335</scope>
    <scope>CATALYTIC ACTIVITY</scope>
</reference>
<reference key="24">
    <citation type="journal article" date="2023" name="Hepatol. Commun.">
        <title>USP5 promotes lipopolysaccharide-induced apoptosis and inflammatory response by stabilizing the TXNIP protein.</title>
        <authorList>
            <person name="Shi S."/>
            <person name="Pan X."/>
            <person name="Chen M."/>
            <person name="Zhang L."/>
            <person name="Zhang S."/>
            <person name="Wang X."/>
            <person name="Shi S."/>
            <person name="Chen Z."/>
            <person name="Lin W."/>
            <person name="Jiang Y."/>
        </authorList>
    </citation>
    <scope>FUNCTION</scope>
    <scope>SUBCELLULAR LOCATION</scope>
</reference>
<reference key="25">
    <citation type="journal article" date="2023" name="Nat. Commun.">
        <title>ERK and USP5 govern PD-1 homeostasis via deubiquitination to modulate tumor immunotherapy.</title>
        <authorList>
            <person name="Xiao X."/>
            <person name="Shi J."/>
            <person name="He C."/>
            <person name="Bu X."/>
            <person name="Sun Y."/>
            <person name="Gao M."/>
            <person name="Xiang B."/>
            <person name="Xiong W."/>
            <person name="Dai P."/>
            <person name="Mao Q."/>
            <person name="Xing X."/>
            <person name="Yao Y."/>
            <person name="Yu H."/>
            <person name="Xu G."/>
            <person name="Li S."/>
            <person name="Ren Y."/>
            <person name="Chen B."/>
            <person name="Jiang C."/>
            <person name="Meng G."/>
            <person name="Lee Y.R."/>
            <person name="Wei W."/>
            <person name="Freeman G.J."/>
            <person name="Xie C."/>
            <person name="Zhang J."/>
        </authorList>
    </citation>
    <scope>FUNCTION</scope>
    <scope>SUBCELLULAR LOCATION</scope>
</reference>
<reference key="26">
    <citation type="journal article" date="2023" name="Cell Death Dis.">
        <title>The deubiquitinase Leon/USP5 interacts with Atg1/ULK1 and antagonizes autophagy.</title>
        <authorList>
            <person name="Pai Y.L."/>
            <person name="Lin Y.J."/>
            <person name="Peng W.H."/>
            <person name="Huang L.T."/>
            <person name="Chou H.Y."/>
            <person name="Wang C.H."/>
            <person name="Chien C.T."/>
            <person name="Chen G.C."/>
        </authorList>
    </citation>
    <scope>FUNCTION</scope>
</reference>
<reference key="27">
    <citation type="journal article" date="2024" name="J. Biol. Chem.">
        <title>The ubiquitin ligase UBR4 and the deubiquitylase USP5 modulate the stability of DNA mismatch repair protein MLH1.</title>
        <authorList>
            <person name="Mao C."/>
            <person name="Li S."/>
            <person name="Che J."/>
            <person name="Liu D."/>
            <person name="Mao X."/>
            <person name="Rao H."/>
        </authorList>
    </citation>
    <scope>FUNCTION</scope>
</reference>
<reference key="28">
    <citation type="journal article" date="2025" name="PLoS Pathog.">
        <title>USP5 inhibits anti-RNA viral innate immunity by deconjugating K48-linked unanchored and K63-linked anchored ubiquitin on IRF3.</title>
        <authorList>
            <person name="Qiao Z."/>
            <person name="Li D."/>
            <person name="Zhang F."/>
            <person name="Zhu J."/>
            <person name="Liu S."/>
            <person name="Bai X."/>
            <person name="Yao H."/>
            <person name="Chen Z."/>
            <person name="Yan Y."/>
            <person name="Xu X."/>
            <person name="Ma F."/>
        </authorList>
    </citation>
    <scope>FUNCTION</scope>
    <scope>CATALYTIC ACTIVITY</scope>
    <scope>MUTAGENESIS OF CYS-335</scope>
</reference>
<reference key="29">
    <citation type="journal article" date="2025" name="Nat. Commun.">
        <title>USP5 stabilizes YTHDF1 to control cancer immune surveillance through mTORC1-mediated phosphorylation.</title>
        <authorList>
            <person name="Shao N."/>
            <person name="Xi L."/>
            <person name="Lv Y."/>
            <person name="Idris M."/>
            <person name="Zhang L."/>
            <person name="Cao Y."/>
            <person name="Xiang J."/>
            <person name="Xu X."/>
            <person name="Ong B.X."/>
            <person name="Zhang Q."/>
            <person name="Peng X."/>
            <person name="Yue X."/>
            <person name="Xu F."/>
            <person name="Liu C."/>
        </authorList>
    </citation>
    <scope>FUNCTION</scope>
    <scope>PHOSPHORYLATION AT SER-149</scope>
    <scope>MUTAGENESIS OF SER-149</scope>
    <scope>SUBUNIT</scope>
</reference>
<reference key="30">
    <citation type="journal article" date="2006" name="Cell">
        <title>The ubiquitin binding domain ZnF UBP recognizes the C-terminal diglycine motif of unanchored ubiquitin.</title>
        <authorList>
            <person name="Reyes-Turcu F.E."/>
            <person name="Horton J.R."/>
            <person name="Mullally J.E."/>
            <person name="Heroux A."/>
            <person name="Cheng X."/>
            <person name="Wilkinson K.D."/>
        </authorList>
    </citation>
    <scope>X-RAY CRYSTALLOGRAPHY (2.09 ANGSTROMS) OF 163-291 IN COMPLEX WITH UBIQUITIN</scope>
    <scope>ZINC-BINDING</scope>
    <scope>MUTAGENESIS OF CYS-199; CYS-202; CYS-219 AND HIS-232</scope>
</reference>
<reference key="31">
    <citation type="submission" date="2006-06" db="PDB data bank">
        <title>Solution structure of the first and second UBA domains in the human ubiquitin specific protease 5 (isopeptidase 5).</title>
        <authorList>
            <consortium name="RIKEN structural genomics initiative (RSGI)"/>
        </authorList>
    </citation>
    <scope>STRUCTURE BY NMR OF 655-772</scope>
</reference>
<reference key="32">
    <citation type="submission" date="2009-12" db="PDB data bank">
        <title>Covalent ubiquitin-USP5 complex.</title>
        <authorList>
            <person name="Walker J.R."/>
            <person name="Avvakumov G.V."/>
            <person name="Xue S."/>
            <person name="Butler-Cole C."/>
            <person name="Weigelt J."/>
            <person name="Bountra C."/>
            <person name="Arrowsmith C.H."/>
            <person name="Edwards A.M."/>
            <person name="Bochkarev A."/>
            <person name="Dhe-Paganon S."/>
        </authorList>
    </citation>
    <scope>X-RAY CRYSTALLOGRAPHY (2.8 ANGSTROMS) OF 1-858 IN COMPLEX WITH UBIQUITIN</scope>
    <scope>DISULFIDE BOND</scope>
    <scope>ZINC-BINDING</scope>
</reference>
<dbReference type="EC" id="3.4.19.12" evidence="13 17"/>
<dbReference type="EMBL" id="X91349">
    <property type="protein sequence ID" value="CAA62690.1"/>
    <property type="molecule type" value="mRNA"/>
</dbReference>
<dbReference type="EMBL" id="U47927">
    <property type="protein sequence ID" value="AAC50465.1"/>
    <property type="molecule type" value="mRNA"/>
</dbReference>
<dbReference type="EMBL" id="U47924">
    <property type="protein sequence ID" value="AAB51314.1"/>
    <property type="molecule type" value="Genomic_DNA"/>
</dbReference>
<dbReference type="EMBL" id="U47924">
    <property type="protein sequence ID" value="AAB51315.1"/>
    <property type="molecule type" value="Genomic_DNA"/>
</dbReference>
<dbReference type="EMBL" id="U35116">
    <property type="protein sequence ID" value="AAA78934.1"/>
    <property type="molecule type" value="mRNA"/>
</dbReference>
<dbReference type="EMBL" id="CH471116">
    <property type="protein sequence ID" value="EAW88724.1"/>
    <property type="molecule type" value="Genomic_DNA"/>
</dbReference>
<dbReference type="EMBL" id="CH471116">
    <property type="protein sequence ID" value="EAW88725.1"/>
    <property type="molecule type" value="Genomic_DNA"/>
</dbReference>
<dbReference type="EMBL" id="CH471116">
    <property type="protein sequence ID" value="EAW88726.1"/>
    <property type="molecule type" value="Genomic_DNA"/>
</dbReference>
<dbReference type="EMBL" id="CH471116">
    <property type="protein sequence ID" value="EAW88727.1"/>
    <property type="molecule type" value="Genomic_DNA"/>
</dbReference>
<dbReference type="EMBL" id="BC004889">
    <property type="protein sequence ID" value="AAH04889.1"/>
    <property type="molecule type" value="mRNA"/>
</dbReference>
<dbReference type="EMBL" id="BC005139">
    <property type="protein sequence ID" value="AAH05139.1"/>
    <property type="molecule type" value="mRNA"/>
</dbReference>
<dbReference type="CCDS" id="CCDS31733.1">
    <molecule id="P45974-2"/>
</dbReference>
<dbReference type="CCDS" id="CCDS41743.1">
    <molecule id="P45974-1"/>
</dbReference>
<dbReference type="PIR" id="S68227">
    <property type="entry name" value="S68227"/>
</dbReference>
<dbReference type="RefSeq" id="NP_001092006.1">
    <molecule id="P45974-1"/>
    <property type="nucleotide sequence ID" value="NM_001098536.2"/>
</dbReference>
<dbReference type="RefSeq" id="NP_003472.2">
    <molecule id="P45974-2"/>
    <property type="nucleotide sequence ID" value="NM_003481.3"/>
</dbReference>
<dbReference type="PDB" id="2DAG">
    <property type="method" value="NMR"/>
    <property type="chains" value="A=655-715"/>
</dbReference>
<dbReference type="PDB" id="2DAK">
    <property type="method" value="NMR"/>
    <property type="chains" value="A=723-772"/>
</dbReference>
<dbReference type="PDB" id="2G43">
    <property type="method" value="X-ray"/>
    <property type="resolution" value="2.09 A"/>
    <property type="chains" value="A/B=163-291"/>
</dbReference>
<dbReference type="PDB" id="2G45">
    <property type="method" value="X-ray"/>
    <property type="resolution" value="1.99 A"/>
    <property type="chains" value="A/D=163-291"/>
</dbReference>
<dbReference type="PDB" id="3IHP">
    <property type="method" value="X-ray"/>
    <property type="resolution" value="2.80 A"/>
    <property type="chains" value="A/B=1-858"/>
</dbReference>
<dbReference type="PDB" id="6DXH">
    <property type="method" value="X-ray"/>
    <property type="resolution" value="2.00 A"/>
    <property type="chains" value="A=171-290"/>
</dbReference>
<dbReference type="PDB" id="6DXT">
    <property type="method" value="X-ray"/>
    <property type="resolution" value="1.95 A"/>
    <property type="chains" value="A/B=171-290"/>
</dbReference>
<dbReference type="PDB" id="6NFT">
    <property type="method" value="X-ray"/>
    <property type="resolution" value="1.65 A"/>
    <property type="chains" value="A/B=171-290"/>
</dbReference>
<dbReference type="PDB" id="6P9G">
    <property type="method" value="X-ray"/>
    <property type="resolution" value="2.10 A"/>
    <property type="chains" value="A=171-290"/>
</dbReference>
<dbReference type="PDB" id="7MS5">
    <property type="method" value="X-ray"/>
    <property type="resolution" value="1.98 A"/>
    <property type="chains" value="A/B=171-290"/>
</dbReference>
<dbReference type="PDB" id="7MS6">
    <property type="method" value="X-ray"/>
    <property type="resolution" value="1.55 A"/>
    <property type="chains" value="A=171-290"/>
</dbReference>
<dbReference type="PDB" id="7MS7">
    <property type="method" value="X-ray"/>
    <property type="resolution" value="1.45 A"/>
    <property type="chains" value="A/B=171-290"/>
</dbReference>
<dbReference type="PDBsum" id="2DAG"/>
<dbReference type="PDBsum" id="2DAK"/>
<dbReference type="PDBsum" id="2G43"/>
<dbReference type="PDBsum" id="2G45"/>
<dbReference type="PDBsum" id="3IHP"/>
<dbReference type="PDBsum" id="6DXH"/>
<dbReference type="PDBsum" id="6DXT"/>
<dbReference type="PDBsum" id="6NFT"/>
<dbReference type="PDBsum" id="6P9G"/>
<dbReference type="PDBsum" id="7MS5"/>
<dbReference type="PDBsum" id="7MS6"/>
<dbReference type="PDBsum" id="7MS7"/>
<dbReference type="SMR" id="P45974"/>
<dbReference type="BioGRID" id="113751">
    <property type="interactions" value="212"/>
</dbReference>
<dbReference type="DIP" id="DIP-34459N"/>
<dbReference type="FunCoup" id="P45974">
    <property type="interactions" value="3414"/>
</dbReference>
<dbReference type="IntAct" id="P45974">
    <property type="interactions" value="45"/>
</dbReference>
<dbReference type="MINT" id="P45974"/>
<dbReference type="STRING" id="9606.ENSP00000229268"/>
<dbReference type="BindingDB" id="P45974"/>
<dbReference type="ChEMBL" id="CHEMBL6158"/>
<dbReference type="GuidetoPHARMACOLOGY" id="2431"/>
<dbReference type="MEROPS" id="C19.001"/>
<dbReference type="GlyGen" id="P45974">
    <property type="glycosylation" value="1 site, 1 O-linked glycan (1 site)"/>
</dbReference>
<dbReference type="iPTMnet" id="P45974"/>
<dbReference type="MetOSite" id="P45974"/>
<dbReference type="PhosphoSitePlus" id="P45974"/>
<dbReference type="SwissPalm" id="P45974"/>
<dbReference type="BioMuta" id="USP5"/>
<dbReference type="DMDM" id="1717869"/>
<dbReference type="REPRODUCTION-2DPAGE" id="IPI00375145"/>
<dbReference type="CPTAC" id="CPTAC-603"/>
<dbReference type="CPTAC" id="CPTAC-604"/>
<dbReference type="jPOST" id="P45974"/>
<dbReference type="MassIVE" id="P45974"/>
<dbReference type="PaxDb" id="9606-ENSP00000229268"/>
<dbReference type="PeptideAtlas" id="P45974"/>
<dbReference type="ProteomicsDB" id="55692">
    <molecule id="P45974-1"/>
</dbReference>
<dbReference type="ProteomicsDB" id="55693">
    <molecule id="P45974-2"/>
</dbReference>
<dbReference type="Pumba" id="P45974"/>
<dbReference type="Antibodypedia" id="1723">
    <property type="antibodies" value="395 antibodies from 31 providers"/>
</dbReference>
<dbReference type="DNASU" id="8078"/>
<dbReference type="Ensembl" id="ENST00000229268.13">
    <molecule id="P45974-1"/>
    <property type="protein sequence ID" value="ENSP00000229268.8"/>
    <property type="gene ID" value="ENSG00000111667.14"/>
</dbReference>
<dbReference type="Ensembl" id="ENST00000389231.9">
    <molecule id="P45974-2"/>
    <property type="protein sequence ID" value="ENSP00000373883.5"/>
    <property type="gene ID" value="ENSG00000111667.14"/>
</dbReference>
<dbReference type="GeneID" id="8078"/>
<dbReference type="KEGG" id="hsa:8078"/>
<dbReference type="MANE-Select" id="ENST00000229268.13">
    <property type="protein sequence ID" value="ENSP00000229268.8"/>
    <property type="RefSeq nucleotide sequence ID" value="NM_001098536.2"/>
    <property type="RefSeq protein sequence ID" value="NP_001092006.1"/>
</dbReference>
<dbReference type="UCSC" id="uc001qrh.5">
    <molecule id="P45974-1"/>
    <property type="organism name" value="human"/>
</dbReference>
<dbReference type="AGR" id="HGNC:12628"/>
<dbReference type="CTD" id="8078"/>
<dbReference type="DisGeNET" id="8078"/>
<dbReference type="GeneCards" id="USP5"/>
<dbReference type="HGNC" id="HGNC:12628">
    <property type="gene designation" value="USP5"/>
</dbReference>
<dbReference type="HPA" id="ENSG00000111667">
    <property type="expression patterns" value="Low tissue specificity"/>
</dbReference>
<dbReference type="MIM" id="601447">
    <property type="type" value="gene"/>
</dbReference>
<dbReference type="neXtProt" id="NX_P45974"/>
<dbReference type="OpenTargets" id="ENSG00000111667"/>
<dbReference type="PharmGKB" id="PA37253"/>
<dbReference type="VEuPathDB" id="HostDB:ENSG00000111667"/>
<dbReference type="eggNOG" id="KOG0944">
    <property type="taxonomic scope" value="Eukaryota"/>
</dbReference>
<dbReference type="GeneTree" id="ENSGT00940000156036"/>
<dbReference type="HOGENOM" id="CLU_009884_1_0_1"/>
<dbReference type="InParanoid" id="P45974"/>
<dbReference type="OMA" id="FVPCEHT"/>
<dbReference type="OrthoDB" id="361536at2759"/>
<dbReference type="PAN-GO" id="P45974">
    <property type="GO annotations" value="5 GO annotations based on evolutionary models"/>
</dbReference>
<dbReference type="PhylomeDB" id="P45974"/>
<dbReference type="TreeFam" id="TF300576"/>
<dbReference type="BRENDA" id="3.4.19.12">
    <property type="organism ID" value="2681"/>
</dbReference>
<dbReference type="PathwayCommons" id="P45974"/>
<dbReference type="Reactome" id="R-HSA-5689880">
    <property type="pathway name" value="Ub-specific processing proteases"/>
</dbReference>
<dbReference type="Reactome" id="R-HSA-8866652">
    <property type="pathway name" value="Synthesis of active ubiquitin: roles of E1 and E2 enzymes"/>
</dbReference>
<dbReference type="SignaLink" id="P45974"/>
<dbReference type="SIGNOR" id="P45974"/>
<dbReference type="BioGRID-ORCS" id="8078">
    <property type="hits" value="729 hits in 1162 CRISPR screens"/>
</dbReference>
<dbReference type="CD-CODE" id="91857CE7">
    <property type="entry name" value="Nucleolus"/>
</dbReference>
<dbReference type="CD-CODE" id="DEE660B4">
    <property type="entry name" value="Stress granule"/>
</dbReference>
<dbReference type="CD-CODE" id="FB4E32DD">
    <property type="entry name" value="Presynaptic clusters and postsynaptic densities"/>
</dbReference>
<dbReference type="ChiTaRS" id="USP5">
    <property type="organism name" value="human"/>
</dbReference>
<dbReference type="EvolutionaryTrace" id="P45974"/>
<dbReference type="GeneWiki" id="USP5"/>
<dbReference type="GenomeRNAi" id="8078"/>
<dbReference type="Pharos" id="P45974">
    <property type="development level" value="Tchem"/>
</dbReference>
<dbReference type="PRO" id="PR:P45974"/>
<dbReference type="Proteomes" id="UP000005640">
    <property type="component" value="Chromosome 12"/>
</dbReference>
<dbReference type="RNAct" id="P45974">
    <property type="molecule type" value="protein"/>
</dbReference>
<dbReference type="Bgee" id="ENSG00000111667">
    <property type="expression patterns" value="Expressed in prefrontal cortex and 187 other cell types or tissues"/>
</dbReference>
<dbReference type="ExpressionAtlas" id="P45974">
    <property type="expression patterns" value="baseline and differential"/>
</dbReference>
<dbReference type="GO" id="GO:0005737">
    <property type="term" value="C:cytoplasm"/>
    <property type="evidence" value="ECO:0000314"/>
    <property type="project" value="UniProt"/>
</dbReference>
<dbReference type="GO" id="GO:0005829">
    <property type="term" value="C:cytosol"/>
    <property type="evidence" value="ECO:0000318"/>
    <property type="project" value="GO_Central"/>
</dbReference>
<dbReference type="GO" id="GO:0005764">
    <property type="term" value="C:lysosome"/>
    <property type="evidence" value="ECO:0000304"/>
    <property type="project" value="ProtInc"/>
</dbReference>
<dbReference type="GO" id="GO:0005634">
    <property type="term" value="C:nucleus"/>
    <property type="evidence" value="ECO:0000318"/>
    <property type="project" value="GO_Central"/>
</dbReference>
<dbReference type="GO" id="GO:0098793">
    <property type="term" value="C:presynapse"/>
    <property type="evidence" value="ECO:0007669"/>
    <property type="project" value="GOC"/>
</dbReference>
<dbReference type="GO" id="GO:0004843">
    <property type="term" value="F:cysteine-type deubiquitinase activity"/>
    <property type="evidence" value="ECO:0000314"/>
    <property type="project" value="ParkinsonsUK-UCL"/>
</dbReference>
<dbReference type="GO" id="GO:0004197">
    <property type="term" value="F:cysteine-type endopeptidase activity"/>
    <property type="evidence" value="ECO:0000304"/>
    <property type="project" value="ProtInc"/>
</dbReference>
<dbReference type="GO" id="GO:0101005">
    <property type="term" value="F:deubiquitinase activity"/>
    <property type="evidence" value="ECO:0000314"/>
    <property type="project" value="FlyBase"/>
</dbReference>
<dbReference type="GO" id="GO:0043130">
    <property type="term" value="F:ubiquitin binding"/>
    <property type="evidence" value="ECO:0000314"/>
    <property type="project" value="ParkinsonsUK-UCL"/>
</dbReference>
<dbReference type="GO" id="GO:0008270">
    <property type="term" value="F:zinc ion binding"/>
    <property type="evidence" value="ECO:0007669"/>
    <property type="project" value="UniProtKB-KW"/>
</dbReference>
<dbReference type="GO" id="GO:0032435">
    <property type="term" value="P:negative regulation of proteasomal ubiquitin-dependent protein catabolic process"/>
    <property type="evidence" value="ECO:0000314"/>
    <property type="project" value="UniProt"/>
</dbReference>
<dbReference type="GO" id="GO:0002841">
    <property type="term" value="P:negative regulation of T cell mediated immune response to tumor cell"/>
    <property type="evidence" value="ECO:0000314"/>
    <property type="project" value="UniProt"/>
</dbReference>
<dbReference type="GO" id="GO:2000059">
    <property type="term" value="P:negative regulation of ubiquitin-dependent protein catabolic process"/>
    <property type="evidence" value="ECO:0000314"/>
    <property type="project" value="ParkinsonsUK-UCL"/>
</dbReference>
<dbReference type="GO" id="GO:0032436">
    <property type="term" value="P:positive regulation of proteasomal ubiquitin-dependent protein catabolic process"/>
    <property type="evidence" value="ECO:0000315"/>
    <property type="project" value="UniProtKB"/>
</dbReference>
<dbReference type="GO" id="GO:0016579">
    <property type="term" value="P:protein deubiquitination"/>
    <property type="evidence" value="ECO:0000304"/>
    <property type="project" value="Reactome"/>
</dbReference>
<dbReference type="GO" id="GO:0071108">
    <property type="term" value="P:protein K48-linked deubiquitination"/>
    <property type="evidence" value="ECO:0000315"/>
    <property type="project" value="UniProtKB"/>
</dbReference>
<dbReference type="GO" id="GO:0016567">
    <property type="term" value="P:protein ubiquitination"/>
    <property type="evidence" value="ECO:0000304"/>
    <property type="project" value="Reactome"/>
</dbReference>
<dbReference type="GO" id="GO:0006508">
    <property type="term" value="P:proteolysis"/>
    <property type="evidence" value="ECO:0007669"/>
    <property type="project" value="UniProtKB-KW"/>
</dbReference>
<dbReference type="GO" id="GO:0031647">
    <property type="term" value="P:regulation of protein stability"/>
    <property type="evidence" value="ECO:0000318"/>
    <property type="project" value="GO_Central"/>
</dbReference>
<dbReference type="GO" id="GO:0140251">
    <property type="term" value="P:regulation protein catabolic process at presynapse"/>
    <property type="evidence" value="ECO:0007669"/>
    <property type="project" value="Ensembl"/>
</dbReference>
<dbReference type="CDD" id="cd02658">
    <property type="entry name" value="Peptidase_C19B"/>
    <property type="match status" value="1"/>
</dbReference>
<dbReference type="CDD" id="cd14383">
    <property type="entry name" value="UBA1_UBP5"/>
    <property type="match status" value="1"/>
</dbReference>
<dbReference type="CDD" id="cd14386">
    <property type="entry name" value="UBA2_UBP5"/>
    <property type="match status" value="1"/>
</dbReference>
<dbReference type="FunFam" id="1.10.8.10:FF:000016">
    <property type="entry name" value="Ubiquitin carboxyl-terminal hydrolase"/>
    <property type="match status" value="1"/>
</dbReference>
<dbReference type="FunFam" id="1.10.8.10:FF:000087">
    <property type="entry name" value="Ubiquitin carboxyl-terminal hydrolase"/>
    <property type="match status" value="1"/>
</dbReference>
<dbReference type="FunFam" id="3.30.40.10:FF:000026">
    <property type="entry name" value="Ubiquitin carboxyl-terminal hydrolase"/>
    <property type="match status" value="1"/>
</dbReference>
<dbReference type="FunFam" id="3.30.40.10:FF:000256">
    <property type="entry name" value="Ubiquitin carboxyl-terminal hydrolase"/>
    <property type="match status" value="1"/>
</dbReference>
<dbReference type="FunFam" id="3.90.70.10:FF:000033">
    <property type="entry name" value="Ubiquitin carboxyl-terminal hydrolase"/>
    <property type="match status" value="1"/>
</dbReference>
<dbReference type="FunFam" id="3.90.70.10:FF:000042">
    <property type="entry name" value="Ubiquitin carboxyl-terminal hydrolase"/>
    <property type="match status" value="1"/>
</dbReference>
<dbReference type="Gene3D" id="3.90.70.10">
    <property type="entry name" value="Cysteine proteinases"/>
    <property type="match status" value="2"/>
</dbReference>
<dbReference type="Gene3D" id="1.10.8.10">
    <property type="entry name" value="DNA helicase RuvA subunit, C-terminal domain"/>
    <property type="match status" value="2"/>
</dbReference>
<dbReference type="Gene3D" id="3.30.40.10">
    <property type="entry name" value="Zinc/RING finger domain, C3HC4 (zinc finger)"/>
    <property type="match status" value="3"/>
</dbReference>
<dbReference type="InterPro" id="IPR038765">
    <property type="entry name" value="Papain-like_cys_pep_sf"/>
</dbReference>
<dbReference type="InterPro" id="IPR001394">
    <property type="entry name" value="Peptidase_C19_UCH"/>
</dbReference>
<dbReference type="InterPro" id="IPR050185">
    <property type="entry name" value="Ub_carboxyl-term_hydrolase"/>
</dbReference>
<dbReference type="InterPro" id="IPR015940">
    <property type="entry name" value="UBA"/>
</dbReference>
<dbReference type="InterPro" id="IPR009060">
    <property type="entry name" value="UBA-like_sf"/>
</dbReference>
<dbReference type="InterPro" id="IPR016652">
    <property type="entry name" value="Ubiquitinyl_hydrolase"/>
</dbReference>
<dbReference type="InterPro" id="IPR041432">
    <property type="entry name" value="UBP13_Znf-UBP_var"/>
</dbReference>
<dbReference type="InterPro" id="IPR041812">
    <property type="entry name" value="UBP5_UBA1"/>
</dbReference>
<dbReference type="InterPro" id="IPR018200">
    <property type="entry name" value="USP_CS"/>
</dbReference>
<dbReference type="InterPro" id="IPR028889">
    <property type="entry name" value="USP_dom"/>
</dbReference>
<dbReference type="InterPro" id="IPR013083">
    <property type="entry name" value="Znf_RING/FYVE/PHD"/>
</dbReference>
<dbReference type="InterPro" id="IPR001607">
    <property type="entry name" value="Znf_UBP"/>
</dbReference>
<dbReference type="PANTHER" id="PTHR21646">
    <property type="entry name" value="UBIQUITIN CARBOXYL-TERMINAL HYDROLASE"/>
    <property type="match status" value="1"/>
</dbReference>
<dbReference type="PANTHER" id="PTHR21646:SF103">
    <property type="entry name" value="UBIQUITIN CARBOXYL-TERMINAL HYDROLASE"/>
    <property type="match status" value="1"/>
</dbReference>
<dbReference type="Pfam" id="PF22562">
    <property type="entry name" value="UBA_7"/>
    <property type="match status" value="2"/>
</dbReference>
<dbReference type="Pfam" id="PF00443">
    <property type="entry name" value="UCH"/>
    <property type="match status" value="1"/>
</dbReference>
<dbReference type="Pfam" id="PF02148">
    <property type="entry name" value="zf-UBP"/>
    <property type="match status" value="1"/>
</dbReference>
<dbReference type="Pfam" id="PF17807">
    <property type="entry name" value="zf-UBP_var"/>
    <property type="match status" value="1"/>
</dbReference>
<dbReference type="PIRSF" id="PIRSF016308">
    <property type="entry name" value="UBP"/>
    <property type="match status" value="1"/>
</dbReference>
<dbReference type="SMART" id="SM00165">
    <property type="entry name" value="UBA"/>
    <property type="match status" value="2"/>
</dbReference>
<dbReference type="SMART" id="SM00290">
    <property type="entry name" value="ZnF_UBP"/>
    <property type="match status" value="1"/>
</dbReference>
<dbReference type="SUPFAM" id="SSF54001">
    <property type="entry name" value="Cysteine proteinases"/>
    <property type="match status" value="1"/>
</dbReference>
<dbReference type="SUPFAM" id="SSF57850">
    <property type="entry name" value="RING/U-box"/>
    <property type="match status" value="1"/>
</dbReference>
<dbReference type="SUPFAM" id="SSF46934">
    <property type="entry name" value="UBA-like"/>
    <property type="match status" value="1"/>
</dbReference>
<dbReference type="PROSITE" id="PS50030">
    <property type="entry name" value="UBA"/>
    <property type="match status" value="2"/>
</dbReference>
<dbReference type="PROSITE" id="PS00972">
    <property type="entry name" value="USP_1"/>
    <property type="match status" value="1"/>
</dbReference>
<dbReference type="PROSITE" id="PS00973">
    <property type="entry name" value="USP_2"/>
    <property type="match status" value="1"/>
</dbReference>
<dbReference type="PROSITE" id="PS50235">
    <property type="entry name" value="USP_3"/>
    <property type="match status" value="1"/>
</dbReference>
<dbReference type="PROSITE" id="PS50271">
    <property type="entry name" value="ZF_UBP"/>
    <property type="match status" value="1"/>
</dbReference>
<comment type="function">
    <text evidence="1 9 11 13 14 15 16 17 18">Deubiquitinating enzyme that participates in a wide range of cellular processes by specifically cleaving isopeptide bonds between ubiquitin and substrate proteins or ubiquitin itself. Affects thereby important cellular signaling pathways such as NF-kappa-B, Wnt/beta-catenin, and cytokine production by regulating ubiquitin-dependent protein degradation. Participates in the activation of the Wnt signaling pathway by promoting FOXM1 deubiquitination and stabilization that induces the recruitment of beta-catenin to Wnt target gene promoter (PubMed:26912724). Regulates the assembly and disassembly of heat-induced stress granules by mediating the hydrolysis of unanchored ubiquitin chains (PubMed:29567855). Promotes lipopolysaccharide-induced apoptosis and inflammatory response by stabilizing the TXNIP protein (PubMed:37534934). Affects T-cell biology by stabilizing the inhibitory receptor on T-cells PDC1 (PubMed:37208329). Acts as a negative regulator of autophagy by regulating ULK1 at both protein and mRNA levels (PubMed:37607937). Acts also as a negative regulator of type I interferon production by simultaneously removing both 'Lys-48'-linked unanchored and 'Lys-63'-linked anchored polyubiquitin chains on the transcription factor IRF3 (PubMed:39761299). Modulates the stability of DNA mismatch repair protein MLH1 and counteracts the effect of the ubiquitin ligase UBR4 (PubMed:39032648). Upon activation by insulin, it gets phosphorylated through mTORC1-mediated phosphorylation to enhance YTHDF1 stability by removing 'Lys-11'-linked polyubiquitination (PubMed:39900921). May also deubiquitinate other substrates such as the calcium channel CACNA1H (By similarity).</text>
</comment>
<comment type="catalytic activity">
    <reaction evidence="13 17">
        <text>Thiol-dependent hydrolysis of ester, thioester, amide, peptide and isopeptide bonds formed by the C-terminal Gly of ubiquitin (a 76-residue protein attached to proteins as an intracellular targeting signal).</text>
        <dbReference type="EC" id="3.4.19.12"/>
    </reaction>
</comment>
<comment type="subunit">
    <text evidence="1">Homodimer (PubMed:39900921). Interacts with TRIML1.</text>
</comment>
<comment type="interaction">
    <interactant intactId="EBI-741277">
        <id>P45974</id>
    </interactant>
    <interactant intactId="EBI-724310">
        <id>Q15038</id>
        <label>DAZAP2</label>
    </interactant>
    <organismsDiffer>false</organismsDiffer>
    <experiments>3</experiments>
</comment>
<comment type="interaction">
    <interactant intactId="EBI-741277">
        <id>P45974</id>
    </interactant>
    <interactant intactId="EBI-954531">
        <id>P54727</id>
        <label>RAD23B</label>
    </interactant>
    <organismsDiffer>false</organismsDiffer>
    <experiments>2</experiments>
</comment>
<comment type="interaction">
    <interactant intactId="EBI-741277">
        <id>P45974</id>
    </interactant>
    <interactant intactId="EBI-473249">
        <id>O75528</id>
        <label>TADA3</label>
    </interactant>
    <organismsDiffer>false</organismsDiffer>
    <experiments>2</experiments>
</comment>
<comment type="interaction">
    <interactant intactId="EBI-741277">
        <id>P45974</id>
    </interactant>
    <interactant intactId="EBI-9675724">
        <id>Q8WW34</id>
        <label>TMEM239</label>
    </interactant>
    <organismsDiffer>false</organismsDiffer>
    <experiments>3</experiments>
</comment>
<comment type="interaction">
    <interactant intactId="EBI-12072186">
        <id>P45974-2</id>
    </interactant>
    <interactant intactId="EBI-723313">
        <id>Q9NWF9</id>
        <label>RNF216</label>
    </interactant>
    <organismsDiffer>false</organismsDiffer>
    <experiments>3</experiments>
</comment>
<comment type="interaction">
    <interactant intactId="EBI-12072186">
        <id>P45974-2</id>
    </interactant>
    <interactant intactId="EBI-2643803">
        <id>Q8N0X7</id>
        <label>SPART</label>
    </interactant>
    <organismsDiffer>false</organismsDiffer>
    <experiments>3</experiments>
</comment>
<comment type="interaction">
    <interactant intactId="EBI-12072186">
        <id>P45974-2</id>
    </interactant>
    <interactant intactId="EBI-11528917">
        <id>Q8WW34-2</id>
        <label>TMEM239</label>
    </interactant>
    <organismsDiffer>false</organismsDiffer>
    <experiments>3</experiments>
</comment>
<comment type="interaction">
    <interactant intactId="EBI-12072186">
        <id>P45974-2</id>
    </interactant>
    <interactant intactId="EBI-2800203">
        <id>O14773</id>
        <label>TPP1</label>
    </interactant>
    <organismsDiffer>false</organismsDiffer>
    <experiments>3</experiments>
</comment>
<comment type="interaction">
    <interactant intactId="EBI-12072186">
        <id>P45974-2</id>
    </interactant>
    <interactant intactId="EBI-2340370">
        <id>Q9BZR9</id>
        <label>TRIM8</label>
    </interactant>
    <organismsDiffer>false</organismsDiffer>
    <experiments>3</experiments>
</comment>
<comment type="interaction">
    <interactant intactId="EBI-12072186">
        <id>P45974-2</id>
    </interactant>
    <interactant intactId="EBI-413034">
        <id>P0CG47</id>
        <label>UBB</label>
    </interactant>
    <organismsDiffer>false</organismsDiffer>
    <experiments>3</experiments>
</comment>
<comment type="subcellular location">
    <subcellularLocation>
        <location evidence="14">Cytoplasm</location>
    </subcellularLocation>
    <subcellularLocation>
        <location evidence="13">Cytoplasm</location>
        <location evidence="13">Stress granule</location>
    </subcellularLocation>
    <subcellularLocation>
        <location evidence="13 15">Nucleus</location>
    </subcellularLocation>
</comment>
<comment type="alternative products">
    <event type="alternative splicing"/>
    <isoform>
        <id>P45974-1</id>
        <name>Long</name>
        <sequence type="displayed"/>
    </isoform>
    <isoform>
        <id>P45974-2</id>
        <name>Short</name>
        <sequence type="described" ref="VSP_005259"/>
    </isoform>
</comment>
<comment type="domain">
    <text>The UBP-type zinc finger domain interacts selectively with an unmodified C-terminus of the proximal ubiquitin. Both UBA domains are involved in polyubiquitin recognition.</text>
</comment>
<comment type="PTM">
    <text evidence="12">Ubiquitinated by SMURF1; leading to proteasomal degradation.</text>
</comment>
<comment type="PTM">
    <text evidence="1">SUMOylated at Lys-113; SUMOylation affects the interaction with Cav3.2 channels.</text>
</comment>
<comment type="miscellaneous">
    <text>The UBP-type zinc finger domain crystallizes as a dimer linked by a disulfide bond between the Cys-195 residues of both molecules, but there is no evidence that the full-length USP5 exists as a dimer.</text>
</comment>
<comment type="similarity">
    <text evidence="21">Belongs to the peptidase C19 family.</text>
</comment>
<sequence length="858" mass="95786">MAELSEEALLSVLPTIRVPKAGDRVHKDECAFSFDTPESEGGLYICMNTFLGFGKQYVERHFNKTGQRVYLHLRRTRRPKEEDPATGTGDPPRKKPTRLAIGVEGGFDLSEEKFELDEDVKIVILPDYLEIARDGLGGLPDIVRDRVTSAVEALLSADSASRKQEVQAWDGEVRQVSKHAFSLKQLDNPARIPPCGWKCSKCDMRENLWLNLTDGSILCGRRYFDGSGGNNHAVEHYRETGYPLAVKLGTITPDGADVYSYDEDDMVLDPSLAEHLSHFGIDMLKMQKTDKTMTELEIDMNQRIGEWELIQESGVPLKPLFGPGYTGIRNLGNSCYLNSVVQVLFSIPDFQRKYVDKLEKIFQNAPTDPTQDFSTQVAKLGHGLLSGEYSKPVPESGDGERVPEQKEVQDGIAPRMFKALIGKGHPEFSTNRQQDAQEFFLHLINMVERNCRSSENPNEVFRFLVEEKIKCLATEKVKYTQRVDYIMQLPVPMDAALNKEELLEYEEKKRQAEEEKMALPELVRAQVPFSSCLEAYGAPEQVDDFWSTALQAKSVAVKTTRFASFPDYLVIQIKKFTFGLDWVPKKLDVSIEMPEELDISQLRGTGLQPGEEELPDIAPPLVTPDEPKGSLGFYGNEDEDSFCSPHFSSPTSPMLDESVIIQLVEMGFPMDACRKAVYYTGNSGAEAAMNWVMSHMDDPDFANPLILPGSSGPGSTSAAADPPPEDCVTTIVSMGFSRDQALKALRATNNSLERAVDWIFSHIDDLDAEAAMDISEGRSAADSISESVPVGPKVRDGPGKYQLFAFISHMGTSTMCGHYVCHIKKEGRWVIYNDQKVCASEKPPKDLGYIYFYQRVAS</sequence>
<gene>
    <name type="primary">USP5</name>
    <name type="synonym">ISOT</name>
</gene>
<organism>
    <name type="scientific">Homo sapiens</name>
    <name type="common">Human</name>
    <dbReference type="NCBI Taxonomy" id="9606"/>
    <lineage>
        <taxon>Eukaryota</taxon>
        <taxon>Metazoa</taxon>
        <taxon>Chordata</taxon>
        <taxon>Craniata</taxon>
        <taxon>Vertebrata</taxon>
        <taxon>Euteleostomi</taxon>
        <taxon>Mammalia</taxon>
        <taxon>Eutheria</taxon>
        <taxon>Euarchontoglires</taxon>
        <taxon>Primates</taxon>
        <taxon>Haplorrhini</taxon>
        <taxon>Catarrhini</taxon>
        <taxon>Hominidae</taxon>
        <taxon>Homo</taxon>
    </lineage>
</organism>
<feature type="initiator methionine" description="Removed" evidence="22 25 26">
    <location>
        <position position="1"/>
    </location>
</feature>
<feature type="chain" id="PRO_0000080623" description="Ubiquitin carboxyl-terminal hydrolase 5">
    <location>
        <begin position="2"/>
        <end position="858"/>
    </location>
</feature>
<feature type="domain" description="USP">
    <location>
        <begin position="326"/>
        <end position="856"/>
    </location>
</feature>
<feature type="domain" description="UBA 1" evidence="2">
    <location>
        <begin position="654"/>
        <end position="695"/>
    </location>
</feature>
<feature type="domain" description="UBA 2" evidence="2">
    <location>
        <begin position="722"/>
        <end position="762"/>
    </location>
</feature>
<feature type="zinc finger region" description="UBP-type; degenerate" evidence="3">
    <location>
        <begin position="175"/>
        <end position="283"/>
    </location>
</feature>
<feature type="region of interest" description="Disordered" evidence="6">
    <location>
        <begin position="74"/>
        <end position="96"/>
    </location>
</feature>
<feature type="active site" description="Nucleophile">
    <location>
        <position position="335"/>
    </location>
</feature>
<feature type="active site" description="Proton acceptor" evidence="4 5">
    <location>
        <position position="818"/>
    </location>
</feature>
<feature type="binding site" evidence="3">
    <location>
        <position position="199"/>
    </location>
    <ligand>
        <name>Zn(2+)</name>
        <dbReference type="ChEBI" id="CHEBI:29105"/>
    </ligand>
</feature>
<feature type="binding site" evidence="3">
    <location>
        <position position="202"/>
    </location>
    <ligand>
        <name>Zn(2+)</name>
        <dbReference type="ChEBI" id="CHEBI:29105"/>
    </ligand>
</feature>
<feature type="binding site">
    <location>
        <position position="209"/>
    </location>
    <ligand>
        <name>substrate</name>
    </ligand>
</feature>
<feature type="binding site" evidence="3">
    <location>
        <position position="219"/>
    </location>
    <ligand>
        <name>Zn(2+)</name>
        <dbReference type="ChEBI" id="CHEBI:29105"/>
    </ligand>
</feature>
<feature type="binding site">
    <location>
        <begin position="221"/>
        <end position="224"/>
    </location>
    <ligand>
        <name>substrate</name>
    </ligand>
</feature>
<feature type="binding site" evidence="3">
    <location>
        <position position="232"/>
    </location>
    <ligand>
        <name>Zn(2+)</name>
        <dbReference type="ChEBI" id="CHEBI:29105"/>
    </ligand>
</feature>
<feature type="binding site">
    <location>
        <position position="259"/>
    </location>
    <ligand>
        <name>substrate</name>
    </ligand>
</feature>
<feature type="binding site">
    <location>
        <position position="261"/>
    </location>
    <ligand>
        <name>substrate</name>
    </ligand>
</feature>
<feature type="binding site">
    <location>
        <position position="264"/>
    </location>
    <ligand>
        <name>substrate</name>
    </ligand>
</feature>
<feature type="modified residue" description="N-acetylalanine" evidence="22 25 26">
    <location>
        <position position="2"/>
    </location>
</feature>
<feature type="modified residue" description="Phosphoserine" evidence="18">
    <location>
        <position position="149"/>
    </location>
</feature>
<feature type="modified residue" description="Phosphoserine" evidence="28">
    <location>
        <position position="156"/>
    </location>
</feature>
<feature type="modified residue" description="Phosphothreonine" evidence="27">
    <location>
        <position position="292"/>
    </location>
</feature>
<feature type="modified residue" description="Phosphothreonine" evidence="1">
    <location>
        <position position="623"/>
    </location>
</feature>
<feature type="modified residue" description="Phosphoserine" evidence="27">
    <location>
        <position position="779"/>
    </location>
</feature>
<feature type="modified residue" description="Phosphoserine" evidence="23 24 27">
    <location>
        <position position="783"/>
    </location>
</feature>
<feature type="modified residue" description="Phosphoserine" evidence="27">
    <location>
        <position position="785"/>
    </location>
</feature>
<feature type="disulfide bond" evidence="19">
    <location>
        <begin position="195"/>
        <end position="816"/>
    </location>
</feature>
<feature type="cross-link" description="Glycyl lysine isopeptide (Lys-Gly) (interchain with G-Cter in SUMO)" evidence="1">
    <location>
        <position position="113"/>
    </location>
</feature>
<feature type="splice variant" id="VSP_005259" description="In isoform Short." evidence="20">
    <original>GSLGFYGNEDEDSFCSPHFSSPTS</original>
    <variation>A</variation>
    <location>
        <begin position="629"/>
        <end position="652"/>
    </location>
</feature>
<feature type="mutagenesis site" description="Decreased rate of activity and decreased zinc binding." evidence="7">
    <original>C</original>
    <variation>A</variation>
    <location>
        <position position="199"/>
    </location>
</feature>
<feature type="mutagenesis site" description="Decreased rate of activity." evidence="7">
    <original>C</original>
    <variation>A</variation>
    <location>
        <position position="202"/>
    </location>
</feature>
<feature type="mutagenesis site" description="Decreased rate of activity." evidence="7">
    <original>C</original>
    <variation>A</variation>
    <location>
        <position position="219"/>
    </location>
</feature>
<feature type="mutagenesis site" description="Loss of polyubiquitin binding and subsequent activation." evidence="10">
    <original>RRY</original>
    <variation>KWF</variation>
    <location>
        <begin position="221"/>
        <end position="223"/>
    </location>
</feature>
<feature type="mutagenesis site" description="Loss of polyubiquitin hydrolysis. Loss of ubiquitin binding; when associated with A-335." evidence="8">
    <original>R</original>
    <variation>A</variation>
    <location>
        <position position="221"/>
    </location>
</feature>
<feature type="mutagenesis site" description="Decreased rate of activity." evidence="7">
    <original>H</original>
    <variation>A</variation>
    <location>
        <position position="232"/>
    </location>
</feature>
<feature type="mutagenesis site" description="Loss of polyubiquitin binding." evidence="10">
    <original>Y</original>
    <variation>F</variation>
    <location>
        <position position="261"/>
    </location>
</feature>
<feature type="mutagenesis site" description="Loss of activity. Loss of ubiquitin binding; when associated with A-221. Lower affinity for triubiquitin and tetraubiquitin, but no effect on affinity for diubiquitin; when associated with E-666. Lower affinity for diubiquitin, triubiquitin and tetraubiquitin; when associated with E-734." evidence="8">
    <original>C</original>
    <variation>A</variation>
    <location>
        <position position="335"/>
    </location>
</feature>
<feature type="mutagenesis site" description="Loss of activity." evidence="13 17">
    <original>C</original>
    <variation>S</variation>
    <location>
        <position position="335"/>
    </location>
</feature>
<feature type="mutagenesis site" description="Loss of polyubiquitin binding and hydrolysis." evidence="8">
    <original>D</original>
    <variation>A</variation>
    <location>
        <position position="435"/>
    </location>
</feature>
<feature type="mutagenesis site" description="Lower affinity for triubiquitin and tetraubiquitin, but no effect on affinity for diubiquitin; when associated with A-335. No effect on activity; when associated with E-734." evidence="8">
    <original>M</original>
    <variation>E</variation>
    <location>
        <position position="666"/>
    </location>
</feature>
<feature type="mutagenesis site" description="Lower affinity for diubiquitin, triubiquitin and tetraubiquitin; when associated with A-335. No effect on activity; when associated with E-666." evidence="8">
    <original>M</original>
    <variation>E</variation>
    <location>
        <position position="734"/>
    </location>
</feature>
<feature type="sequence conflict" description="In Ref. 1; CAA62690." evidence="21" ref="1">
    <original>EL</original>
    <variation>DV</variation>
    <location>
        <begin position="3"/>
        <end position="4"/>
    </location>
</feature>
<feature type="sequence conflict" description="In Ref. 1; CAA62690." evidence="21" ref="1">
    <original>I</original>
    <variation>V</variation>
    <location>
        <position position="45"/>
    </location>
</feature>
<feature type="sequence conflict" description="In Ref. 4; AAA78934." evidence="21" ref="4">
    <original>K</original>
    <variation>R</variation>
    <location>
        <position position="468"/>
    </location>
</feature>
<feature type="sequence conflict" description="In Ref. 4; AAA78934." evidence="21" ref="4">
    <original>G</original>
    <variation>D</variation>
    <location>
        <position position="681"/>
    </location>
</feature>
<feature type="helix" evidence="30">
    <location>
        <begin position="5"/>
        <end position="11"/>
    </location>
</feature>
<feature type="helix" evidence="30">
    <location>
        <begin position="12"/>
        <end position="15"/>
    </location>
</feature>
<feature type="strand" evidence="30">
    <location>
        <begin position="31"/>
        <end position="34"/>
    </location>
</feature>
<feature type="strand" evidence="30">
    <location>
        <begin position="43"/>
        <end position="46"/>
    </location>
</feature>
<feature type="turn" evidence="30">
    <location>
        <begin position="47"/>
        <end position="49"/>
    </location>
</feature>
<feature type="turn" evidence="30">
    <location>
        <begin position="55"/>
        <end position="57"/>
    </location>
</feature>
<feature type="helix" evidence="30">
    <location>
        <begin position="58"/>
        <end position="65"/>
    </location>
</feature>
<feature type="strand" evidence="30">
    <location>
        <begin position="69"/>
        <end position="75"/>
    </location>
</feature>
<feature type="strand" evidence="30">
    <location>
        <begin position="118"/>
        <end position="124"/>
    </location>
</feature>
<feature type="turn" evidence="30">
    <location>
        <begin position="125"/>
        <end position="128"/>
    </location>
</feature>
<feature type="strand" evidence="30">
    <location>
        <begin position="129"/>
        <end position="131"/>
    </location>
</feature>
<feature type="helix" evidence="30">
    <location>
        <begin position="141"/>
        <end position="154"/>
    </location>
</feature>
<feature type="turn" evidence="31">
    <location>
        <begin position="178"/>
        <end position="182"/>
    </location>
</feature>
<feature type="strand" evidence="31">
    <location>
        <begin position="200"/>
        <end position="203"/>
    </location>
</feature>
<feature type="strand" evidence="31">
    <location>
        <begin position="206"/>
        <end position="211"/>
    </location>
</feature>
<feature type="turn" evidence="31">
    <location>
        <begin position="212"/>
        <end position="214"/>
    </location>
</feature>
<feature type="strand" evidence="31">
    <location>
        <begin position="217"/>
        <end position="219"/>
    </location>
</feature>
<feature type="helix" evidence="31">
    <location>
        <begin position="232"/>
        <end position="240"/>
    </location>
</feature>
<feature type="strand" evidence="31">
    <location>
        <begin position="244"/>
        <end position="247"/>
    </location>
</feature>
<feature type="strand" evidence="31">
    <location>
        <begin position="258"/>
        <end position="260"/>
    </location>
</feature>
<feature type="turn" evidence="31">
    <location>
        <begin position="261"/>
        <end position="264"/>
    </location>
</feature>
<feature type="strand" evidence="31">
    <location>
        <begin position="265"/>
        <end position="268"/>
    </location>
</feature>
<feature type="helix" evidence="31">
    <location>
        <begin position="272"/>
        <end position="277"/>
    </location>
</feature>
<feature type="turn" evidence="31">
    <location>
        <begin position="278"/>
        <end position="280"/>
    </location>
</feature>
<feature type="turn" evidence="29">
    <location>
        <begin position="283"/>
        <end position="285"/>
    </location>
</feature>
<feature type="helix" evidence="30">
    <location>
        <begin position="335"/>
        <end position="344"/>
    </location>
</feature>
<feature type="helix" evidence="30">
    <location>
        <begin position="348"/>
        <end position="354"/>
    </location>
</feature>
<feature type="turn" evidence="30">
    <location>
        <begin position="355"/>
        <end position="357"/>
    </location>
</feature>
<feature type="helix" evidence="30">
    <location>
        <begin position="358"/>
        <end position="364"/>
    </location>
</feature>
<feature type="helix" evidence="30">
    <location>
        <begin position="369"/>
        <end position="371"/>
    </location>
</feature>
<feature type="helix" evidence="30">
    <location>
        <begin position="373"/>
        <end position="385"/>
    </location>
</feature>
<feature type="helix" evidence="30">
    <location>
        <begin position="415"/>
        <end position="421"/>
    </location>
</feature>
<feature type="turn" evidence="30">
    <location>
        <begin position="422"/>
        <end position="424"/>
    </location>
</feature>
<feature type="turn" evidence="30">
    <location>
        <begin position="426"/>
        <end position="429"/>
    </location>
</feature>
<feature type="strand" evidence="30">
    <location>
        <begin position="430"/>
        <end position="432"/>
    </location>
</feature>
<feature type="helix" evidence="30">
    <location>
        <begin position="436"/>
        <end position="449"/>
    </location>
</feature>
<feature type="helix" evidence="30">
    <location>
        <begin position="457"/>
        <end position="460"/>
    </location>
</feature>
<feature type="strand" evidence="30">
    <location>
        <begin position="463"/>
        <end position="471"/>
    </location>
</feature>
<feature type="turn" evidence="30">
    <location>
        <begin position="472"/>
        <end position="475"/>
    </location>
</feature>
<feature type="strand" evidence="30">
    <location>
        <begin position="476"/>
        <end position="489"/>
    </location>
</feature>
<feature type="helix" evidence="30">
    <location>
        <begin position="493"/>
        <end position="495"/>
    </location>
</feature>
<feature type="helix" evidence="30">
    <location>
        <begin position="499"/>
        <end position="514"/>
    </location>
</feature>
<feature type="helix" evidence="30">
    <location>
        <begin position="529"/>
        <end position="537"/>
    </location>
</feature>
<feature type="strand" evidence="30">
    <location>
        <begin position="540"/>
        <end position="547"/>
    </location>
</feature>
<feature type="turn" evidence="30">
    <location>
        <begin position="548"/>
        <end position="551"/>
    </location>
</feature>
<feature type="strand" evidence="30">
    <location>
        <begin position="552"/>
        <end position="564"/>
    </location>
</feature>
<feature type="strand" evidence="30">
    <location>
        <begin position="567"/>
        <end position="573"/>
    </location>
</feature>
<feature type="strand" evidence="30">
    <location>
        <begin position="576"/>
        <end position="578"/>
    </location>
</feature>
<feature type="helix" evidence="30">
    <location>
        <begin position="580"/>
        <end position="582"/>
    </location>
</feature>
<feature type="strand" evidence="30">
    <location>
        <begin position="584"/>
        <end position="586"/>
    </location>
</feature>
<feature type="strand" evidence="30">
    <location>
        <begin position="595"/>
        <end position="598"/>
    </location>
</feature>
<feature type="helix" evidence="30">
    <location>
        <begin position="600"/>
        <end position="602"/>
    </location>
</feature>
<feature type="helix" evidence="30">
    <location>
        <begin position="658"/>
        <end position="666"/>
    </location>
</feature>
<feature type="helix" evidence="30">
    <location>
        <begin position="670"/>
        <end position="679"/>
    </location>
</feature>
<feature type="helix" evidence="30">
    <location>
        <begin position="685"/>
        <end position="695"/>
    </location>
</feature>
<feature type="helix" evidence="30">
    <location>
        <begin position="700"/>
        <end position="702"/>
    </location>
</feature>
<feature type="helix" evidence="30">
    <location>
        <begin position="725"/>
        <end position="732"/>
    </location>
</feature>
<feature type="turn" evidence="30">
    <location>
        <begin position="733"/>
        <end position="735"/>
    </location>
</feature>
<feature type="helix" evidence="30">
    <location>
        <begin position="738"/>
        <end position="747"/>
    </location>
</feature>
<feature type="turn" evidence="30">
    <location>
        <begin position="748"/>
        <end position="750"/>
    </location>
</feature>
<feature type="helix" evidence="30">
    <location>
        <begin position="752"/>
        <end position="770"/>
    </location>
</feature>
<feature type="strand" evidence="30">
    <location>
        <begin position="799"/>
        <end position="812"/>
    </location>
</feature>
<feature type="strand" evidence="30">
    <location>
        <begin position="818"/>
        <end position="825"/>
    </location>
</feature>
<feature type="strand" evidence="30">
    <location>
        <begin position="828"/>
        <end position="833"/>
    </location>
</feature>
<feature type="strand" evidence="30">
    <location>
        <begin position="836"/>
        <end position="839"/>
    </location>
</feature>
<feature type="strand" evidence="30">
    <location>
        <begin position="849"/>
        <end position="855"/>
    </location>
</feature>
<accession>P45974</accession>
<accession>D3DUS7</accession>
<accession>D3DUS8</accession>
<accession>Q96J22</accession>
<proteinExistence type="evidence at protein level"/>
<protein>
    <recommendedName>
        <fullName>Ubiquitin carboxyl-terminal hydrolase 5</fullName>
        <ecNumber evidence="13 17">3.4.19.12</ecNumber>
    </recommendedName>
    <alternativeName>
        <fullName>Deubiquitinating enzyme 5</fullName>
    </alternativeName>
    <alternativeName>
        <fullName>Isopeptidase T</fullName>
    </alternativeName>
    <alternativeName>
        <fullName>Ubiquitin thioesterase 5</fullName>
    </alternativeName>
    <alternativeName>
        <fullName>Ubiquitin-specific-processing protease 5</fullName>
    </alternativeName>
</protein>
<name>UBP5_HUMAN</name>